<feature type="chain" id="PRO_0000180713" description="Glucose-6-phosphate isomerase">
    <location>
        <begin position="1"/>
        <end position="554"/>
    </location>
</feature>
<feature type="active site" description="Proton donor" evidence="1">
    <location>
        <position position="359"/>
    </location>
</feature>
<feature type="active site" evidence="1">
    <location>
        <position position="390"/>
    </location>
</feature>
<feature type="active site" evidence="1">
    <location>
        <position position="518"/>
    </location>
</feature>
<keyword id="KW-0963">Cytoplasm</keyword>
<keyword id="KW-0312">Gluconeogenesis</keyword>
<keyword id="KW-0324">Glycolysis</keyword>
<keyword id="KW-0413">Isomerase</keyword>
<dbReference type="EC" id="5.3.1.9" evidence="1"/>
<dbReference type="EMBL" id="CP000058">
    <property type="protein sequence ID" value="AAZ36114.1"/>
    <property type="molecule type" value="Genomic_DNA"/>
</dbReference>
<dbReference type="RefSeq" id="WP_004658628.1">
    <property type="nucleotide sequence ID" value="NC_005773.3"/>
</dbReference>
<dbReference type="SMR" id="Q48N88"/>
<dbReference type="GeneID" id="69857869"/>
<dbReference type="KEGG" id="psp:PSPPH_0852"/>
<dbReference type="eggNOG" id="COG0166">
    <property type="taxonomic scope" value="Bacteria"/>
</dbReference>
<dbReference type="HOGENOM" id="CLU_017947_3_1_6"/>
<dbReference type="UniPathway" id="UPA00109">
    <property type="reaction ID" value="UER00181"/>
</dbReference>
<dbReference type="UniPathway" id="UPA00138"/>
<dbReference type="Proteomes" id="UP000000551">
    <property type="component" value="Chromosome"/>
</dbReference>
<dbReference type="GO" id="GO:0005829">
    <property type="term" value="C:cytosol"/>
    <property type="evidence" value="ECO:0007669"/>
    <property type="project" value="TreeGrafter"/>
</dbReference>
<dbReference type="GO" id="GO:0097367">
    <property type="term" value="F:carbohydrate derivative binding"/>
    <property type="evidence" value="ECO:0007669"/>
    <property type="project" value="InterPro"/>
</dbReference>
<dbReference type="GO" id="GO:0004347">
    <property type="term" value="F:glucose-6-phosphate isomerase activity"/>
    <property type="evidence" value="ECO:0007669"/>
    <property type="project" value="UniProtKB-UniRule"/>
</dbReference>
<dbReference type="GO" id="GO:0048029">
    <property type="term" value="F:monosaccharide binding"/>
    <property type="evidence" value="ECO:0007669"/>
    <property type="project" value="TreeGrafter"/>
</dbReference>
<dbReference type="GO" id="GO:0006094">
    <property type="term" value="P:gluconeogenesis"/>
    <property type="evidence" value="ECO:0007669"/>
    <property type="project" value="UniProtKB-UniRule"/>
</dbReference>
<dbReference type="GO" id="GO:0051156">
    <property type="term" value="P:glucose 6-phosphate metabolic process"/>
    <property type="evidence" value="ECO:0007669"/>
    <property type="project" value="TreeGrafter"/>
</dbReference>
<dbReference type="GO" id="GO:0006096">
    <property type="term" value="P:glycolytic process"/>
    <property type="evidence" value="ECO:0007669"/>
    <property type="project" value="UniProtKB-UniRule"/>
</dbReference>
<dbReference type="CDD" id="cd05015">
    <property type="entry name" value="SIS_PGI_1"/>
    <property type="match status" value="1"/>
</dbReference>
<dbReference type="CDD" id="cd05016">
    <property type="entry name" value="SIS_PGI_2"/>
    <property type="match status" value="1"/>
</dbReference>
<dbReference type="FunFam" id="3.40.50.10490:FF:000018">
    <property type="entry name" value="Glucose-6-phosphate isomerase"/>
    <property type="match status" value="1"/>
</dbReference>
<dbReference type="Gene3D" id="1.10.1390.10">
    <property type="match status" value="1"/>
</dbReference>
<dbReference type="Gene3D" id="3.40.50.10490">
    <property type="entry name" value="Glucose-6-phosphate isomerase like protein, domain 1"/>
    <property type="match status" value="2"/>
</dbReference>
<dbReference type="HAMAP" id="MF_00473">
    <property type="entry name" value="G6P_isomerase"/>
    <property type="match status" value="1"/>
</dbReference>
<dbReference type="InterPro" id="IPR001672">
    <property type="entry name" value="G6P_Isomerase"/>
</dbReference>
<dbReference type="InterPro" id="IPR023096">
    <property type="entry name" value="G6P_Isomerase_C"/>
</dbReference>
<dbReference type="InterPro" id="IPR018189">
    <property type="entry name" value="Phosphoglucose_isomerase_CS"/>
</dbReference>
<dbReference type="InterPro" id="IPR046348">
    <property type="entry name" value="SIS_dom_sf"/>
</dbReference>
<dbReference type="InterPro" id="IPR035476">
    <property type="entry name" value="SIS_PGI_1"/>
</dbReference>
<dbReference type="InterPro" id="IPR035482">
    <property type="entry name" value="SIS_PGI_2"/>
</dbReference>
<dbReference type="NCBIfam" id="NF001211">
    <property type="entry name" value="PRK00179.1"/>
    <property type="match status" value="1"/>
</dbReference>
<dbReference type="PANTHER" id="PTHR11469">
    <property type="entry name" value="GLUCOSE-6-PHOSPHATE ISOMERASE"/>
    <property type="match status" value="1"/>
</dbReference>
<dbReference type="PANTHER" id="PTHR11469:SF1">
    <property type="entry name" value="GLUCOSE-6-PHOSPHATE ISOMERASE"/>
    <property type="match status" value="1"/>
</dbReference>
<dbReference type="Pfam" id="PF00342">
    <property type="entry name" value="PGI"/>
    <property type="match status" value="1"/>
</dbReference>
<dbReference type="PRINTS" id="PR00662">
    <property type="entry name" value="G6PISOMERASE"/>
</dbReference>
<dbReference type="SUPFAM" id="SSF53697">
    <property type="entry name" value="SIS domain"/>
    <property type="match status" value="1"/>
</dbReference>
<dbReference type="PROSITE" id="PS00765">
    <property type="entry name" value="P_GLUCOSE_ISOMERASE_1"/>
    <property type="match status" value="1"/>
</dbReference>
<dbReference type="PROSITE" id="PS00174">
    <property type="entry name" value="P_GLUCOSE_ISOMERASE_2"/>
    <property type="match status" value="1"/>
</dbReference>
<dbReference type="PROSITE" id="PS51463">
    <property type="entry name" value="P_GLUCOSE_ISOMERASE_3"/>
    <property type="match status" value="1"/>
</dbReference>
<organism>
    <name type="scientific">Pseudomonas savastanoi pv. phaseolicola (strain 1448A / Race 6)</name>
    <name type="common">Pseudomonas syringae pv. phaseolicola (strain 1448A / Race 6)</name>
    <dbReference type="NCBI Taxonomy" id="264730"/>
    <lineage>
        <taxon>Bacteria</taxon>
        <taxon>Pseudomonadati</taxon>
        <taxon>Pseudomonadota</taxon>
        <taxon>Gammaproteobacteria</taxon>
        <taxon>Pseudomonadales</taxon>
        <taxon>Pseudomonadaceae</taxon>
        <taxon>Pseudomonas</taxon>
    </lineage>
</organism>
<protein>
    <recommendedName>
        <fullName evidence="1">Glucose-6-phosphate isomerase</fullName>
        <shortName evidence="1">GPI</shortName>
        <ecNumber evidence="1">5.3.1.9</ecNumber>
    </recommendedName>
    <alternativeName>
        <fullName evidence="1">Phosphoglucose isomerase</fullName>
        <shortName evidence="1">PGI</shortName>
    </alternativeName>
    <alternativeName>
        <fullName evidence="1">Phosphohexose isomerase</fullName>
        <shortName evidence="1">PHI</shortName>
    </alternativeName>
</protein>
<evidence type="ECO:0000255" key="1">
    <source>
        <dbReference type="HAMAP-Rule" id="MF_00473"/>
    </source>
</evidence>
<gene>
    <name evidence="1" type="primary">pgi</name>
    <name type="ordered locus">PSPPH_0852</name>
</gene>
<reference key="1">
    <citation type="journal article" date="2005" name="J. Bacteriol.">
        <title>Whole-genome sequence analysis of Pseudomonas syringae pv. phaseolicola 1448A reveals divergence among pathovars in genes involved in virulence and transposition.</title>
        <authorList>
            <person name="Joardar V."/>
            <person name="Lindeberg M."/>
            <person name="Jackson R.W."/>
            <person name="Selengut J."/>
            <person name="Dodson R."/>
            <person name="Brinkac L.M."/>
            <person name="Daugherty S.C."/>
            <person name="DeBoy R.T."/>
            <person name="Durkin A.S."/>
            <person name="Gwinn Giglio M."/>
            <person name="Madupu R."/>
            <person name="Nelson W.C."/>
            <person name="Rosovitz M.J."/>
            <person name="Sullivan S.A."/>
            <person name="Crabtree J."/>
            <person name="Creasy T."/>
            <person name="Davidsen T.M."/>
            <person name="Haft D.H."/>
            <person name="Zafar N."/>
            <person name="Zhou L."/>
            <person name="Halpin R."/>
            <person name="Holley T."/>
            <person name="Khouri H.M."/>
            <person name="Feldblyum T.V."/>
            <person name="White O."/>
            <person name="Fraser C.M."/>
            <person name="Chatterjee A.K."/>
            <person name="Cartinhour S."/>
            <person name="Schneider D."/>
            <person name="Mansfield J.W."/>
            <person name="Collmer A."/>
            <person name="Buell R."/>
        </authorList>
    </citation>
    <scope>NUCLEOTIDE SEQUENCE [LARGE SCALE GENOMIC DNA]</scope>
    <source>
        <strain>1448A / Race 6</strain>
    </source>
</reference>
<comment type="function">
    <text evidence="1">Catalyzes the reversible isomerization of glucose-6-phosphate to fructose-6-phosphate.</text>
</comment>
<comment type="catalytic activity">
    <reaction evidence="1">
        <text>alpha-D-glucose 6-phosphate = beta-D-fructose 6-phosphate</text>
        <dbReference type="Rhea" id="RHEA:11816"/>
        <dbReference type="ChEBI" id="CHEBI:57634"/>
        <dbReference type="ChEBI" id="CHEBI:58225"/>
        <dbReference type="EC" id="5.3.1.9"/>
    </reaction>
</comment>
<comment type="pathway">
    <text evidence="1">Carbohydrate biosynthesis; gluconeogenesis.</text>
</comment>
<comment type="pathway">
    <text evidence="1">Carbohydrate degradation; glycolysis; D-glyceraldehyde 3-phosphate and glycerone phosphate from D-glucose: step 2/4.</text>
</comment>
<comment type="subcellular location">
    <subcellularLocation>
        <location evidence="1">Cytoplasm</location>
    </subcellularLocation>
</comment>
<comment type="similarity">
    <text evidence="1">Belongs to the GPI family.</text>
</comment>
<sequence length="554" mass="61638">MAYYRNPSDVTALPAWQALSKHRQSMQNFSMREAFNSDPQRFSQFTLSSAGLFLDYSKNLITTETRDLLVSLAGEVNLKDAIKAQYDGELVNSSEGRPALHTALRRPVGDKLKVNGVDVMPDVHRVLNQMTELVGRIHDGLWRGYTEKPITDVVNIGIGGSFLGPELVSEALVAYAHKGVRCHYLANIDGSEFHELSMKIRAETTLFIVSSKSFNTLETLKNAQAARAWYLAQGGSEVELHRHFIAVSSNNAAAVAFGIREENIFPMWDWVGGRYSLWSAIGLPIALAIGMSNFKELLSGAYTMDQHFQSAPFEQNMPVLLALLGVWYGNFWNAQSHAILPYDHYLRNITKHLQQLDMESNGKSVRQDGTPTSTDTGPVIWGGVGANGQHAYHQLLHQGTQMIPADFIVPIVSFNPVADHHQWLYANCLSQSQALMMGKTRAEAEAELREKGMSEEEVQKLAPHKVIPGNRPSNTLVVERISPRRLGALVAMYEHKVFVQSVIWGTNAFDQWGVELGKEMGKAVYQRLTGGTEEPADDASTQGLINYFRGRHRG</sequence>
<name>G6PI_PSE14</name>
<accession>Q48N88</accession>
<proteinExistence type="inferred from homology"/>